<organism>
    <name type="scientific">Nitrosococcus oceani (strain ATCC 19707 / BCRC 17464 / JCM 30415 / NCIMB 11848 / C-107)</name>
    <dbReference type="NCBI Taxonomy" id="323261"/>
    <lineage>
        <taxon>Bacteria</taxon>
        <taxon>Pseudomonadati</taxon>
        <taxon>Pseudomonadota</taxon>
        <taxon>Gammaproteobacteria</taxon>
        <taxon>Chromatiales</taxon>
        <taxon>Chromatiaceae</taxon>
        <taxon>Nitrosococcus</taxon>
    </lineage>
</organism>
<reference key="1">
    <citation type="journal article" date="2006" name="Appl. Environ. Microbiol.">
        <title>Complete genome sequence of the marine, chemolithoautotrophic, ammonia-oxidizing bacterium Nitrosococcus oceani ATCC 19707.</title>
        <authorList>
            <person name="Klotz M.G."/>
            <person name="Arp D.J."/>
            <person name="Chain P.S.G."/>
            <person name="El-Sheikh A.F."/>
            <person name="Hauser L.J."/>
            <person name="Hommes N.G."/>
            <person name="Larimer F.W."/>
            <person name="Malfatti S.A."/>
            <person name="Norton J.M."/>
            <person name="Poret-Peterson A.T."/>
            <person name="Vergez L.M."/>
            <person name="Ward B.B."/>
        </authorList>
    </citation>
    <scope>NUCLEOTIDE SEQUENCE [LARGE SCALE GENOMIC DNA]</scope>
    <source>
        <strain>ATCC 19707 / BCRC 17464 / JCM 30415 / NCIMB 11848 / C-107</strain>
    </source>
</reference>
<keyword id="KW-0031">Aminopeptidase</keyword>
<keyword id="KW-0963">Cytoplasm</keyword>
<keyword id="KW-0378">Hydrolase</keyword>
<keyword id="KW-0464">Manganese</keyword>
<keyword id="KW-0479">Metal-binding</keyword>
<keyword id="KW-0645">Protease</keyword>
<keyword id="KW-1185">Reference proteome</keyword>
<evidence type="ECO:0000255" key="1">
    <source>
        <dbReference type="HAMAP-Rule" id="MF_00181"/>
    </source>
</evidence>
<protein>
    <recommendedName>
        <fullName evidence="1">Probable cytosol aminopeptidase</fullName>
        <ecNumber evidence="1">3.4.11.1</ecNumber>
    </recommendedName>
    <alternativeName>
        <fullName evidence="1">Leucine aminopeptidase</fullName>
        <shortName evidence="1">LAP</shortName>
        <ecNumber evidence="1">3.4.11.10</ecNumber>
    </alternativeName>
    <alternativeName>
        <fullName evidence="1">Leucyl aminopeptidase</fullName>
    </alternativeName>
</protein>
<name>AMPA_NITOC</name>
<proteinExistence type="inferred from homology"/>
<dbReference type="EC" id="3.4.11.1" evidence="1"/>
<dbReference type="EC" id="3.4.11.10" evidence="1"/>
<dbReference type="EMBL" id="CP000127">
    <property type="protein sequence ID" value="ABA56818.1"/>
    <property type="molecule type" value="Genomic_DNA"/>
</dbReference>
<dbReference type="RefSeq" id="WP_002812011.1">
    <property type="nucleotide sequence ID" value="NC_007484.1"/>
</dbReference>
<dbReference type="SMR" id="Q3JEC8"/>
<dbReference type="FunCoup" id="Q3JEC8">
    <property type="interactions" value="443"/>
</dbReference>
<dbReference type="STRING" id="323261.Noc_0289"/>
<dbReference type="MEROPS" id="M17.003"/>
<dbReference type="KEGG" id="noc:Noc_0289"/>
<dbReference type="eggNOG" id="COG0260">
    <property type="taxonomic scope" value="Bacteria"/>
</dbReference>
<dbReference type="HOGENOM" id="CLU_013734_2_2_6"/>
<dbReference type="InParanoid" id="Q3JEC8"/>
<dbReference type="Proteomes" id="UP000006838">
    <property type="component" value="Chromosome"/>
</dbReference>
<dbReference type="GO" id="GO:0005737">
    <property type="term" value="C:cytoplasm"/>
    <property type="evidence" value="ECO:0007669"/>
    <property type="project" value="UniProtKB-SubCell"/>
</dbReference>
<dbReference type="GO" id="GO:0030145">
    <property type="term" value="F:manganese ion binding"/>
    <property type="evidence" value="ECO:0007669"/>
    <property type="project" value="UniProtKB-UniRule"/>
</dbReference>
<dbReference type="GO" id="GO:0070006">
    <property type="term" value="F:metalloaminopeptidase activity"/>
    <property type="evidence" value="ECO:0007669"/>
    <property type="project" value="InterPro"/>
</dbReference>
<dbReference type="GO" id="GO:0006508">
    <property type="term" value="P:proteolysis"/>
    <property type="evidence" value="ECO:0007669"/>
    <property type="project" value="UniProtKB-KW"/>
</dbReference>
<dbReference type="CDD" id="cd00433">
    <property type="entry name" value="Peptidase_M17"/>
    <property type="match status" value="1"/>
</dbReference>
<dbReference type="FunFam" id="3.40.630.10:FF:000004">
    <property type="entry name" value="Probable cytosol aminopeptidase"/>
    <property type="match status" value="1"/>
</dbReference>
<dbReference type="Gene3D" id="3.40.220.10">
    <property type="entry name" value="Leucine Aminopeptidase, subunit E, domain 1"/>
    <property type="match status" value="1"/>
</dbReference>
<dbReference type="Gene3D" id="3.40.630.10">
    <property type="entry name" value="Zn peptidases"/>
    <property type="match status" value="1"/>
</dbReference>
<dbReference type="HAMAP" id="MF_00181">
    <property type="entry name" value="Cytosol_peptidase_M17"/>
    <property type="match status" value="1"/>
</dbReference>
<dbReference type="InterPro" id="IPR011356">
    <property type="entry name" value="Leucine_aapep/pepB"/>
</dbReference>
<dbReference type="InterPro" id="IPR043472">
    <property type="entry name" value="Macro_dom-like"/>
</dbReference>
<dbReference type="InterPro" id="IPR000819">
    <property type="entry name" value="Peptidase_M17_C"/>
</dbReference>
<dbReference type="InterPro" id="IPR023042">
    <property type="entry name" value="Peptidase_M17_leu_NH2_pept"/>
</dbReference>
<dbReference type="InterPro" id="IPR008283">
    <property type="entry name" value="Peptidase_M17_N"/>
</dbReference>
<dbReference type="NCBIfam" id="NF002073">
    <property type="entry name" value="PRK00913.1-2"/>
    <property type="match status" value="1"/>
</dbReference>
<dbReference type="NCBIfam" id="NF002074">
    <property type="entry name" value="PRK00913.1-4"/>
    <property type="match status" value="1"/>
</dbReference>
<dbReference type="NCBIfam" id="NF002077">
    <property type="entry name" value="PRK00913.2-4"/>
    <property type="match status" value="1"/>
</dbReference>
<dbReference type="PANTHER" id="PTHR11963:SF23">
    <property type="entry name" value="CYTOSOL AMINOPEPTIDASE"/>
    <property type="match status" value="1"/>
</dbReference>
<dbReference type="PANTHER" id="PTHR11963">
    <property type="entry name" value="LEUCINE AMINOPEPTIDASE-RELATED"/>
    <property type="match status" value="1"/>
</dbReference>
<dbReference type="Pfam" id="PF00883">
    <property type="entry name" value="Peptidase_M17"/>
    <property type="match status" value="1"/>
</dbReference>
<dbReference type="Pfam" id="PF02789">
    <property type="entry name" value="Peptidase_M17_N"/>
    <property type="match status" value="1"/>
</dbReference>
<dbReference type="PRINTS" id="PR00481">
    <property type="entry name" value="LAMNOPPTDASE"/>
</dbReference>
<dbReference type="SUPFAM" id="SSF52949">
    <property type="entry name" value="Macro domain-like"/>
    <property type="match status" value="1"/>
</dbReference>
<dbReference type="SUPFAM" id="SSF53187">
    <property type="entry name" value="Zn-dependent exopeptidases"/>
    <property type="match status" value="1"/>
</dbReference>
<dbReference type="PROSITE" id="PS00631">
    <property type="entry name" value="CYTOSOL_AP"/>
    <property type="match status" value="1"/>
</dbReference>
<accession>Q3JEC8</accession>
<gene>
    <name evidence="1" type="primary">pepA</name>
    <name type="ordered locus">Noc_0289</name>
</gene>
<comment type="function">
    <text evidence="1">Presumably involved in the processing and regular turnover of intracellular proteins. Catalyzes the removal of unsubstituted N-terminal amino acids from various peptides.</text>
</comment>
<comment type="catalytic activity">
    <reaction evidence="1">
        <text>Release of an N-terminal amino acid, Xaa-|-Yaa-, in which Xaa is preferably Leu, but may be other amino acids including Pro although not Arg or Lys, and Yaa may be Pro. Amino acid amides and methyl esters are also readily hydrolyzed, but rates on arylamides are exceedingly low.</text>
        <dbReference type="EC" id="3.4.11.1"/>
    </reaction>
</comment>
<comment type="catalytic activity">
    <reaction evidence="1">
        <text>Release of an N-terminal amino acid, preferentially leucine, but not glutamic or aspartic acids.</text>
        <dbReference type="EC" id="3.4.11.10"/>
    </reaction>
</comment>
<comment type="cofactor">
    <cofactor evidence="1">
        <name>Mn(2+)</name>
        <dbReference type="ChEBI" id="CHEBI:29035"/>
    </cofactor>
    <text evidence="1">Binds 2 manganese ions per subunit.</text>
</comment>
<comment type="subcellular location">
    <subcellularLocation>
        <location evidence="1">Cytoplasm</location>
    </subcellularLocation>
</comment>
<comment type="similarity">
    <text evidence="1">Belongs to the peptidase M17 family.</text>
</comment>
<sequence>MNFHVTSGTPEKQRTAALVVGIYEDEKLSSYAQRIDKASEGYVSRLIKQGDFTGKKGQALLLFALPGVKAERVLLMGCGQKDKVTAKNLRQSWSGAVKALQACGATEAMICPLEAKPKDEELTQWARLIVETAEQALYRYEHTKSKKESLKKPLAKLTLLLDQRSQQPLAEQGIQQGQAIAKGVNLARDLGNLPGNICTPTYLADEARRLAKEYKSLKAKILEQAEMEKLGLGALLAVSRGSRQPPKLITLEYKGAPGKQKPIVLVGKGLTFDAGGISIKPGERMDEMKYDMCGGAGVLGTMQACAELELPLNVIAVVPSSENLPDGAANKPGDVLTSLSGQTIEVLNTDAEGRLILCDALTYSKRYRPDVVIDVATLTGACVIALGAHASGLLSNDQSLAEHLLAAGQTSDDRAWQLPLWDDYQQQLDSNFADMANIGGRGAGTITAACFLARFTEEFRWAHLDIAGTAWLSGKEKGATGRPVPLLTQYLIQRAQEAKTS</sequence>
<feature type="chain" id="PRO_1000019945" description="Probable cytosol aminopeptidase">
    <location>
        <begin position="1"/>
        <end position="501"/>
    </location>
</feature>
<feature type="active site" evidence="1">
    <location>
        <position position="280"/>
    </location>
</feature>
<feature type="active site" evidence="1">
    <location>
        <position position="354"/>
    </location>
</feature>
<feature type="binding site" evidence="1">
    <location>
        <position position="268"/>
    </location>
    <ligand>
        <name>Mn(2+)</name>
        <dbReference type="ChEBI" id="CHEBI:29035"/>
        <label>2</label>
    </ligand>
</feature>
<feature type="binding site" evidence="1">
    <location>
        <position position="273"/>
    </location>
    <ligand>
        <name>Mn(2+)</name>
        <dbReference type="ChEBI" id="CHEBI:29035"/>
        <label>1</label>
    </ligand>
</feature>
<feature type="binding site" evidence="1">
    <location>
        <position position="273"/>
    </location>
    <ligand>
        <name>Mn(2+)</name>
        <dbReference type="ChEBI" id="CHEBI:29035"/>
        <label>2</label>
    </ligand>
</feature>
<feature type="binding site" evidence="1">
    <location>
        <position position="291"/>
    </location>
    <ligand>
        <name>Mn(2+)</name>
        <dbReference type="ChEBI" id="CHEBI:29035"/>
        <label>2</label>
    </ligand>
</feature>
<feature type="binding site" evidence="1">
    <location>
        <position position="350"/>
    </location>
    <ligand>
        <name>Mn(2+)</name>
        <dbReference type="ChEBI" id="CHEBI:29035"/>
        <label>1</label>
    </ligand>
</feature>
<feature type="binding site" evidence="1">
    <location>
        <position position="352"/>
    </location>
    <ligand>
        <name>Mn(2+)</name>
        <dbReference type="ChEBI" id="CHEBI:29035"/>
        <label>1</label>
    </ligand>
</feature>
<feature type="binding site" evidence="1">
    <location>
        <position position="352"/>
    </location>
    <ligand>
        <name>Mn(2+)</name>
        <dbReference type="ChEBI" id="CHEBI:29035"/>
        <label>2</label>
    </ligand>
</feature>